<reference key="1">
    <citation type="journal article" date="1992" name="J. Bacteriol.">
        <title>Sequence analysis and characterization of the mobilization region of a broad-host-range plasmid, pTF-FC2, isolated from Thiobacillus ferrooxidans.</title>
        <authorList>
            <person name="Rohrer J."/>
            <person name="Rawlings D.E."/>
        </authorList>
    </citation>
    <scope>NUCLEOTIDE SEQUENCE [GENOMIC DNA]</scope>
</reference>
<geneLocation type="plasmid">
    <name>pTF-FC2</name>
</geneLocation>
<protein>
    <recommendedName>
        <fullName>Protein MobE</fullName>
    </recommendedName>
</protein>
<sequence>MSDLDDSFAKLLGRQPSDAERQSLYRVRDALGLKNNDALWLVLMALQHYQGQYEKFPQAIAQAAKDTLVNFKVTADATVKASAEAAKADLAQAVAAAAQEVAHNTSAKQMWQWAAGCIAVAFLCVGLFGWYMHSSGKDSGYQAGYGAGYTEAKDEKAAAAWANTPEGRTAYRFAQSGELQRLARCSGKGWKVEKGACYPYPVANEGTYGWALP</sequence>
<proteinExistence type="predicted"/>
<keyword id="KW-0614">Plasmid</keyword>
<name>MOBE_ACIFR</name>
<dbReference type="EMBL" id="M57717">
    <property type="protein sequence ID" value="AAA27392.1"/>
    <property type="molecule type" value="Genomic_DNA"/>
</dbReference>
<dbReference type="PIR" id="E43256">
    <property type="entry name" value="E43256"/>
</dbReference>
<dbReference type="PIR" id="S27625">
    <property type="entry name" value="S27625"/>
</dbReference>
<dbReference type="InterPro" id="IPR046641">
    <property type="entry name" value="DUF6753"/>
</dbReference>
<dbReference type="Pfam" id="PF20538">
    <property type="entry name" value="DUF6753"/>
    <property type="match status" value="1"/>
</dbReference>
<gene>
    <name type="primary">mobE</name>
</gene>
<organism>
    <name type="scientific">Acidithiobacillus ferrooxidans</name>
    <name type="common">Thiobacillus ferrooxidans</name>
    <dbReference type="NCBI Taxonomy" id="920"/>
    <lineage>
        <taxon>Bacteria</taxon>
        <taxon>Pseudomonadati</taxon>
        <taxon>Pseudomonadota</taxon>
        <taxon>Acidithiobacillia</taxon>
        <taxon>Acidithiobacillales</taxon>
        <taxon>Acidithiobacillaceae</taxon>
        <taxon>Acidithiobacillus</taxon>
    </lineage>
</organism>
<feature type="chain" id="PRO_0000068399" description="Protein MobE">
    <location>
        <begin position="1"/>
        <end position="213"/>
    </location>
</feature>
<accession>P22901</accession>